<comment type="function">
    <text evidence="1">Usually encoded in the trnK tRNA gene intron. Probably assists in splicing its own and other chloroplast group II introns.</text>
</comment>
<comment type="subcellular location">
    <subcellularLocation>
        <location>Plastid</location>
        <location>Chloroplast</location>
    </subcellularLocation>
</comment>
<comment type="similarity">
    <text evidence="1">Belongs to the intron maturase 2 family. MatK subfamily.</text>
</comment>
<gene>
    <name evidence="1" type="primary">matK</name>
</gene>
<accession>A0A316</accession>
<feature type="chain" id="PRO_0000355924" description="Maturase K">
    <location>
        <begin position="1"/>
        <end position="505"/>
    </location>
</feature>
<keyword id="KW-0150">Chloroplast</keyword>
<keyword id="KW-0507">mRNA processing</keyword>
<keyword id="KW-0934">Plastid</keyword>
<keyword id="KW-1185">Reference proteome</keyword>
<keyword id="KW-0694">RNA-binding</keyword>
<keyword id="KW-0819">tRNA processing</keyword>
<reference key="1">
    <citation type="journal article" date="2007" name="Plant Biotechnol. J.">
        <title>The complete nucleotide sequence of the coffee (Coffea arabica L.) chloroplast genome: organization and implications for biotechnology and phylogenetic relationships amongst angiosperms.</title>
        <authorList>
            <person name="Samson N."/>
            <person name="Bausher M.G."/>
            <person name="Lee S.-B."/>
            <person name="Jansen R.K."/>
            <person name="Daniell H."/>
        </authorList>
    </citation>
    <scope>NUCLEOTIDE SEQUENCE [LARGE SCALE GENOMIC DNA]</scope>
</reference>
<reference key="2">
    <citation type="submission" date="2006-10" db="EMBL/GenBank/DDBJ databases">
        <title>Characterisation of Coffea chloroplast microsatellites and evidence for the recent divergence of C. arabica and C. eugenioides chloroplast genomes.</title>
        <authorList>
            <person name="Tesfaye Geletu K."/>
            <person name="Borsch T."/>
            <person name="Govers K."/>
            <person name="Bekele E."/>
        </authorList>
    </citation>
    <scope>NUCLEOTIDE SEQUENCE [GENOMIC DNA]</scope>
    <source>
        <strain>cv. C002</strain>
        <strain>cv. C007</strain>
        <strain>cv. C016</strain>
        <strain>cv. C034</strain>
        <strain>cv. C035</strain>
        <strain>cv. C036</strain>
        <strain>cv. C037</strain>
        <tissue>Leaf</tissue>
    </source>
</reference>
<evidence type="ECO:0000255" key="1">
    <source>
        <dbReference type="HAMAP-Rule" id="MF_01390"/>
    </source>
</evidence>
<organism>
    <name type="scientific">Coffea arabica</name>
    <name type="common">Arabian coffee</name>
    <dbReference type="NCBI Taxonomy" id="13443"/>
    <lineage>
        <taxon>Eukaryota</taxon>
        <taxon>Viridiplantae</taxon>
        <taxon>Streptophyta</taxon>
        <taxon>Embryophyta</taxon>
        <taxon>Tracheophyta</taxon>
        <taxon>Spermatophyta</taxon>
        <taxon>Magnoliopsida</taxon>
        <taxon>eudicotyledons</taxon>
        <taxon>Gunneridae</taxon>
        <taxon>Pentapetalae</taxon>
        <taxon>asterids</taxon>
        <taxon>lamiids</taxon>
        <taxon>Gentianales</taxon>
        <taxon>Rubiaceae</taxon>
        <taxon>Ixoroideae</taxon>
        <taxon>Gardenieae complex</taxon>
        <taxon>Bertiereae - Coffeeae clade</taxon>
        <taxon>Coffeeae</taxon>
        <taxon>Coffea</taxon>
    </lineage>
</organism>
<dbReference type="EMBL" id="EF044213">
    <property type="protein sequence ID" value="ABJ89660.1"/>
    <property type="molecule type" value="Genomic_DNA"/>
</dbReference>
<dbReference type="EMBL" id="AM412452">
    <property type="protein sequence ID" value="CAL80895.1"/>
    <property type="molecule type" value="Genomic_DNA"/>
</dbReference>
<dbReference type="EMBL" id="AM412453">
    <property type="protein sequence ID" value="CAL80896.1"/>
    <property type="molecule type" value="Genomic_DNA"/>
</dbReference>
<dbReference type="EMBL" id="AM412454">
    <property type="protein sequence ID" value="CAL80897.1"/>
    <property type="molecule type" value="Genomic_DNA"/>
</dbReference>
<dbReference type="EMBL" id="AM412455">
    <property type="protein sequence ID" value="CAL80898.1"/>
    <property type="molecule type" value="Genomic_DNA"/>
</dbReference>
<dbReference type="EMBL" id="AM412456">
    <property type="protein sequence ID" value="CAL80899.1"/>
    <property type="molecule type" value="Genomic_DNA"/>
</dbReference>
<dbReference type="EMBL" id="AM412457">
    <property type="protein sequence ID" value="CAL80900.1"/>
    <property type="molecule type" value="Genomic_DNA"/>
</dbReference>
<dbReference type="EMBL" id="AM412458">
    <property type="protein sequence ID" value="CAL80901.1"/>
    <property type="molecule type" value="Genomic_DNA"/>
</dbReference>
<dbReference type="RefSeq" id="YP_817463.1">
    <property type="nucleotide sequence ID" value="NC_008535.1"/>
</dbReference>
<dbReference type="GeneID" id="4421803"/>
<dbReference type="OrthoDB" id="1886907at2759"/>
<dbReference type="Proteomes" id="UP000515148">
    <property type="component" value="Chloroplast Pltd"/>
</dbReference>
<dbReference type="GO" id="GO:0009507">
    <property type="term" value="C:chloroplast"/>
    <property type="evidence" value="ECO:0007669"/>
    <property type="project" value="UniProtKB-SubCell"/>
</dbReference>
<dbReference type="GO" id="GO:0003723">
    <property type="term" value="F:RNA binding"/>
    <property type="evidence" value="ECO:0007669"/>
    <property type="project" value="UniProtKB-KW"/>
</dbReference>
<dbReference type="GO" id="GO:0006397">
    <property type="term" value="P:mRNA processing"/>
    <property type="evidence" value="ECO:0007669"/>
    <property type="project" value="UniProtKB-KW"/>
</dbReference>
<dbReference type="GO" id="GO:0008380">
    <property type="term" value="P:RNA splicing"/>
    <property type="evidence" value="ECO:0007669"/>
    <property type="project" value="UniProtKB-UniRule"/>
</dbReference>
<dbReference type="GO" id="GO:0008033">
    <property type="term" value="P:tRNA processing"/>
    <property type="evidence" value="ECO:0007669"/>
    <property type="project" value="UniProtKB-KW"/>
</dbReference>
<dbReference type="HAMAP" id="MF_01390">
    <property type="entry name" value="MatK"/>
    <property type="match status" value="1"/>
</dbReference>
<dbReference type="InterPro" id="IPR024937">
    <property type="entry name" value="Domain_X"/>
</dbReference>
<dbReference type="InterPro" id="IPR002866">
    <property type="entry name" value="Maturase_MatK"/>
</dbReference>
<dbReference type="InterPro" id="IPR024942">
    <property type="entry name" value="Maturase_MatK_N"/>
</dbReference>
<dbReference type="PANTHER" id="PTHR34811">
    <property type="entry name" value="MATURASE K"/>
    <property type="match status" value="1"/>
</dbReference>
<dbReference type="PANTHER" id="PTHR34811:SF1">
    <property type="entry name" value="MATURASE K"/>
    <property type="match status" value="1"/>
</dbReference>
<dbReference type="Pfam" id="PF01348">
    <property type="entry name" value="Intron_maturas2"/>
    <property type="match status" value="1"/>
</dbReference>
<dbReference type="Pfam" id="PF01824">
    <property type="entry name" value="MatK_N"/>
    <property type="match status" value="1"/>
</dbReference>
<proteinExistence type="inferred from homology"/>
<name>MATK_COFAR</name>
<sequence>MEEIQGYLQLDRSQQHGFLYPLIFQEYIYALAHDHSLNRSILLENPVYDNKSSFLIVKRLITRIYQQNHFIIFANNSNQNLFFGHNKNLYSQTISEGLAFIVEIPFYIRLISSQGGKGILKFRNLRSIHSPFPFLENNFSHLNSVLDILIPHPVHLEILVQNLRYWVKDASSLHLLRFFFHEYWNWNTLIDRKKPSFDFSPKRNQKLFFLLYNSHVCEYESIFFFLRKQSSHLRSTSFGVFLERIYFYEKKERLVEVFAKDFQASLWLFKDPFIHYVRYQGKSILVSNGTPLLMNKWKSYLVNFWQCHFGIWFHPGRVYINQLPNYSFNFMGYLSSVRLNHSMVRSQMLENAFLINNAIKKFDTLVPLIPLIGSLAKAKFCNLLGHPISKPIWTDLADSDIIDRFWHICRNLSHYYSGSSKKKSLYRIKYILRLSCAKTLARKHKSTVRAFLKGLGSEFLEKFLTSEEEALSLTFSRTSSTFRGVYRNRIWYLDIIYINDLTNYQ</sequence>
<geneLocation type="chloroplast"/>
<protein>
    <recommendedName>
        <fullName evidence="1">Maturase K</fullName>
    </recommendedName>
    <alternativeName>
        <fullName evidence="1">Intron maturase</fullName>
    </alternativeName>
</protein>